<reference key="1">
    <citation type="journal article" date="1998" name="Nature">
        <title>Deciphering the biology of Mycobacterium tuberculosis from the complete genome sequence.</title>
        <authorList>
            <person name="Cole S.T."/>
            <person name="Brosch R."/>
            <person name="Parkhill J."/>
            <person name="Garnier T."/>
            <person name="Churcher C.M."/>
            <person name="Harris D.E."/>
            <person name="Gordon S.V."/>
            <person name="Eiglmeier K."/>
            <person name="Gas S."/>
            <person name="Barry C.E. III"/>
            <person name="Tekaia F."/>
            <person name="Badcock K."/>
            <person name="Basham D."/>
            <person name="Brown D."/>
            <person name="Chillingworth T."/>
            <person name="Connor R."/>
            <person name="Davies R.M."/>
            <person name="Devlin K."/>
            <person name="Feltwell T."/>
            <person name="Gentles S."/>
            <person name="Hamlin N."/>
            <person name="Holroyd S."/>
            <person name="Hornsby T."/>
            <person name="Jagels K."/>
            <person name="Krogh A."/>
            <person name="McLean J."/>
            <person name="Moule S."/>
            <person name="Murphy L.D."/>
            <person name="Oliver S."/>
            <person name="Osborne J."/>
            <person name="Quail M.A."/>
            <person name="Rajandream M.A."/>
            <person name="Rogers J."/>
            <person name="Rutter S."/>
            <person name="Seeger K."/>
            <person name="Skelton S."/>
            <person name="Squares S."/>
            <person name="Squares R."/>
            <person name="Sulston J.E."/>
            <person name="Taylor K."/>
            <person name="Whitehead S."/>
            <person name="Barrell B.G."/>
        </authorList>
    </citation>
    <scope>NUCLEOTIDE SEQUENCE [LARGE SCALE GENOMIC DNA]</scope>
    <source>
        <strain>ATCC 25618 / H37Rv</strain>
    </source>
</reference>
<reference key="2">
    <citation type="journal article" date="2004" name="Eur. J. Biochem.">
        <title>Expression and characterization of the protein Rv1399c from Mycobacterium tuberculosis. A novel carboxyl esterase structurally related to the HSL family.</title>
        <authorList>
            <person name="Canaan S."/>
            <person name="Maurin D."/>
            <person name="Chahinian H."/>
            <person name="Pouilly B."/>
            <person name="Durousseau C."/>
            <person name="Frassinetti F."/>
            <person name="Scappuccini-Calvo L."/>
            <person name="Cambillau C."/>
            <person name="Bourne Y."/>
        </authorList>
    </citation>
    <scope>FUNCTION</scope>
    <scope>CATALYTIC ACTIVITY</scope>
    <scope>ACTIVITY REGULATION</scope>
    <scope>BIOPHYSICOCHEMICAL PROPERTIES</scope>
    <scope>SUBUNIT</scope>
    <scope>GENE NAME</scope>
    <source>
        <strain>ATCC 25618 / H37Rv</strain>
    </source>
</reference>
<reference key="3">
    <citation type="journal article" date="2011" name="Mol. Cell. Proteomics">
        <title>Proteogenomic analysis of Mycobacterium tuberculosis by high resolution mass spectrometry.</title>
        <authorList>
            <person name="Kelkar D.S."/>
            <person name="Kumar D."/>
            <person name="Kumar P."/>
            <person name="Balakrishnan L."/>
            <person name="Muthusamy B."/>
            <person name="Yadav A.K."/>
            <person name="Shrivastava P."/>
            <person name="Marimuthu A."/>
            <person name="Anand S."/>
            <person name="Sundaram H."/>
            <person name="Kingsbury R."/>
            <person name="Harsha H.C."/>
            <person name="Nair B."/>
            <person name="Prasad T.S."/>
            <person name="Chauhan D.S."/>
            <person name="Katoch K."/>
            <person name="Katoch V.M."/>
            <person name="Kumar P."/>
            <person name="Chaerkady R."/>
            <person name="Ramachandran S."/>
            <person name="Dash D."/>
            <person name="Pandey A."/>
        </authorList>
    </citation>
    <scope>ACETYLATION [LARGE SCALE ANALYSIS] AT THR-2</scope>
    <scope>CLEAVAGE OF INITIATOR METHIONINE [LARGE SCALE ANALYSIS]</scope>
    <scope>IDENTIFICATION BY MASS SPECTROMETRY [LARGE SCALE ANALYSIS]</scope>
    <source>
        <strain>ATCC 25618 / H37Rv</strain>
    </source>
</reference>
<reference key="4">
    <citation type="journal article" date="2016" name="ACS Infect. Dis.">
        <title>Small-molecule probes reveal esterases with persistent activity in dormant and reactivating Mycobacterium tuberculosis.</title>
        <authorList>
            <person name="Tallman K.R."/>
            <person name="Levine S.R."/>
            <person name="Beatty K.E."/>
        </authorList>
    </citation>
    <scope>DEVELOPMENTAL STAGE</scope>
</reference>
<name>NLHH_MYCTU</name>
<protein>
    <recommendedName>
        <fullName evidence="6">Carboxylesterase NlhH</fullName>
        <ecNumber evidence="3">3.1.1.1</ecNumber>
    </recommendedName>
    <alternativeName>
        <fullName evidence="5">NLH-H</fullName>
    </alternativeName>
</protein>
<gene>
    <name type="primary">nlhH</name>
    <name evidence="5" type="synonym">lipH</name>
    <name type="ordered locus">Rv1399c</name>
</gene>
<dbReference type="EC" id="3.1.1.1" evidence="3"/>
<dbReference type="EMBL" id="AL123456">
    <property type="protein sequence ID" value="CCP44158.1"/>
    <property type="molecule type" value="Genomic_DNA"/>
</dbReference>
<dbReference type="PIR" id="D70900">
    <property type="entry name" value="D70900"/>
</dbReference>
<dbReference type="RefSeq" id="NP_215915.1">
    <property type="nucleotide sequence ID" value="NC_000962.3"/>
</dbReference>
<dbReference type="RefSeq" id="WP_003407276.1">
    <property type="nucleotide sequence ID" value="NZ_NVQJ01000038.1"/>
</dbReference>
<dbReference type="SMR" id="P9WK87"/>
<dbReference type="FunCoup" id="P9WK87">
    <property type="interactions" value="48"/>
</dbReference>
<dbReference type="STRING" id="83332.Rv1399c"/>
<dbReference type="SwissLipids" id="SLP:000001381"/>
<dbReference type="iPTMnet" id="P9WK87"/>
<dbReference type="PaxDb" id="83332-Rv1399c"/>
<dbReference type="DNASU" id="886731"/>
<dbReference type="GeneID" id="886731"/>
<dbReference type="KEGG" id="mtu:Rv1399c"/>
<dbReference type="KEGG" id="mtv:RVBD_1399c"/>
<dbReference type="TubercuList" id="Rv1399c"/>
<dbReference type="eggNOG" id="COG0657">
    <property type="taxonomic scope" value="Bacteria"/>
</dbReference>
<dbReference type="InParanoid" id="P9WK87"/>
<dbReference type="OrthoDB" id="3181909at2"/>
<dbReference type="PhylomeDB" id="P9WK87"/>
<dbReference type="SABIO-RK" id="P9WK87"/>
<dbReference type="Proteomes" id="UP000001584">
    <property type="component" value="Chromosome"/>
</dbReference>
<dbReference type="GO" id="GO:0008126">
    <property type="term" value="F:acetylesterase activity"/>
    <property type="evidence" value="ECO:0007669"/>
    <property type="project" value="RHEA"/>
</dbReference>
<dbReference type="GO" id="GO:0106435">
    <property type="term" value="F:carboxylesterase activity"/>
    <property type="evidence" value="ECO:0007669"/>
    <property type="project" value="UniProtKB-EC"/>
</dbReference>
<dbReference type="GO" id="GO:0034338">
    <property type="term" value="F:short-chain carboxylesterase activity"/>
    <property type="evidence" value="ECO:0000314"/>
    <property type="project" value="MTBBASE"/>
</dbReference>
<dbReference type="GO" id="GO:0009056">
    <property type="term" value="P:catabolic process"/>
    <property type="evidence" value="ECO:0000314"/>
    <property type="project" value="MTBBASE"/>
</dbReference>
<dbReference type="FunFam" id="3.40.50.1820:FF:000089">
    <property type="entry name" value="Alpha/beta hydrolase"/>
    <property type="match status" value="1"/>
</dbReference>
<dbReference type="Gene3D" id="3.40.50.1820">
    <property type="entry name" value="alpha/beta hydrolase"/>
    <property type="match status" value="1"/>
</dbReference>
<dbReference type="InterPro" id="IPR013094">
    <property type="entry name" value="AB_hydrolase_3"/>
</dbReference>
<dbReference type="InterPro" id="IPR029058">
    <property type="entry name" value="AB_hydrolase_fold"/>
</dbReference>
<dbReference type="InterPro" id="IPR050300">
    <property type="entry name" value="GDXG_lipolytic_enzyme"/>
</dbReference>
<dbReference type="PANTHER" id="PTHR48081">
    <property type="entry name" value="AB HYDROLASE SUPERFAMILY PROTEIN C4A8.06C"/>
    <property type="match status" value="1"/>
</dbReference>
<dbReference type="PANTHER" id="PTHR48081:SF8">
    <property type="entry name" value="ALPHA_BETA HYDROLASE FOLD-3 DOMAIN-CONTAINING PROTEIN-RELATED"/>
    <property type="match status" value="1"/>
</dbReference>
<dbReference type="Pfam" id="PF07859">
    <property type="entry name" value="Abhydrolase_3"/>
    <property type="match status" value="1"/>
</dbReference>
<dbReference type="SUPFAM" id="SSF53474">
    <property type="entry name" value="alpha/beta-Hydrolases"/>
    <property type="match status" value="1"/>
</dbReference>
<accession>P9WK87</accession>
<accession>F2GF45</accession>
<accession>L0T9I5</accession>
<accession>P71667</accession>
<accession>Q7D8H2</accession>
<evidence type="ECO:0000250" key="1">
    <source>
        <dbReference type="UniProtKB" id="O06350"/>
    </source>
</evidence>
<evidence type="ECO:0000250" key="2">
    <source>
        <dbReference type="UniProtKB" id="Q5NUF3"/>
    </source>
</evidence>
<evidence type="ECO:0000269" key="3">
    <source>
    </source>
</evidence>
<evidence type="ECO:0000269" key="4">
    <source>
    </source>
</evidence>
<evidence type="ECO:0000303" key="5">
    <source>
    </source>
</evidence>
<evidence type="ECO:0000305" key="6"/>
<evidence type="ECO:0000305" key="7">
    <source>
    </source>
</evidence>
<evidence type="ECO:0007744" key="8">
    <source>
    </source>
</evidence>
<feature type="initiator methionine" description="Removed" evidence="8">
    <location>
        <position position="1"/>
    </location>
</feature>
<feature type="chain" id="PRO_0000419169" description="Carboxylesterase NlhH">
    <location>
        <begin position="2"/>
        <end position="319"/>
    </location>
</feature>
<feature type="short sequence motif" description="Involved in the stabilization of the negatively charged intermediate by the formation of the oxyanion hole" evidence="2">
    <location>
        <begin position="88"/>
        <end position="90"/>
    </location>
</feature>
<feature type="active site" evidence="1">
    <location>
        <position position="162"/>
    </location>
</feature>
<feature type="active site" evidence="1">
    <location>
        <position position="260"/>
    </location>
</feature>
<feature type="active site" evidence="1">
    <location>
        <position position="290"/>
    </location>
</feature>
<feature type="modified residue" description="N-acetylthreonine" evidence="8">
    <location>
        <position position="2"/>
    </location>
</feature>
<proteinExistence type="evidence at protein level"/>
<sequence>MTEPTVARPDIDPVLKMLLDTFPVTFTAADGVEVARARLRQLKTPPELLPELRIEERTVGYDGLTDIPVRVYWPPVVRDNLPVVVYYHGGGWSLGGLDTHDPVARAHAVGAQAIVVSVDYRLAPEHPYPAGIDDSWAALRWVGENAAELGGDPSRIAVAGDSAGGNISAVMAQLARDVGGPPLVFQLLWYPTTMADLSLPSFTENADAPILDRDVIDAFLAWYVPGLDISDHTMLPTTLAPGNADLSGLPPAFIGTAEHDPLRDDGACYAELLTAAGVSVELSNEPTMVHGYVNFALVVPAAAEATGRGLAALKRALHA</sequence>
<organism>
    <name type="scientific">Mycobacterium tuberculosis (strain ATCC 25618 / H37Rv)</name>
    <dbReference type="NCBI Taxonomy" id="83332"/>
    <lineage>
        <taxon>Bacteria</taxon>
        <taxon>Bacillati</taxon>
        <taxon>Actinomycetota</taxon>
        <taxon>Actinomycetes</taxon>
        <taxon>Mycobacteriales</taxon>
        <taxon>Mycobacteriaceae</taxon>
        <taxon>Mycobacterium</taxon>
        <taxon>Mycobacterium tuberculosis complex</taxon>
    </lineage>
</organism>
<comment type="function">
    <text evidence="3">Hydrolyzes various short-chain esters, such as triacylglycerols and vinyl esters. Has no activity against emulsified substrates.</text>
</comment>
<comment type="catalytic activity">
    <reaction evidence="3">
        <text>a carboxylic ester + H2O = an alcohol + a carboxylate + H(+)</text>
        <dbReference type="Rhea" id="RHEA:21164"/>
        <dbReference type="ChEBI" id="CHEBI:15377"/>
        <dbReference type="ChEBI" id="CHEBI:15378"/>
        <dbReference type="ChEBI" id="CHEBI:29067"/>
        <dbReference type="ChEBI" id="CHEBI:30879"/>
        <dbReference type="ChEBI" id="CHEBI:33308"/>
        <dbReference type="EC" id="3.1.1.1"/>
    </reaction>
    <physiologicalReaction direction="left-to-right" evidence="3">
        <dbReference type="Rhea" id="RHEA:21165"/>
    </physiologicalReaction>
</comment>
<comment type="catalytic activity">
    <reaction evidence="3">
        <text>a propanoate ester + H2O = an aliphatic alcohol + propanoate + H(+)</text>
        <dbReference type="Rhea" id="RHEA:48484"/>
        <dbReference type="ChEBI" id="CHEBI:2571"/>
        <dbReference type="ChEBI" id="CHEBI:15377"/>
        <dbReference type="ChEBI" id="CHEBI:15378"/>
        <dbReference type="ChEBI" id="CHEBI:17272"/>
        <dbReference type="ChEBI" id="CHEBI:36243"/>
    </reaction>
    <physiologicalReaction direction="left-to-right" evidence="3">
        <dbReference type="Rhea" id="RHEA:48485"/>
    </physiologicalReaction>
</comment>
<comment type="catalytic activity">
    <reaction evidence="3">
        <text>1,2,3-tripropanoylglycerol + H2O = dipropanoylglycerol + propanoate + H(+)</text>
        <dbReference type="Rhea" id="RHEA:48024"/>
        <dbReference type="ChEBI" id="CHEBI:15377"/>
        <dbReference type="ChEBI" id="CHEBI:15378"/>
        <dbReference type="ChEBI" id="CHEBI:17272"/>
        <dbReference type="ChEBI" id="CHEBI:88153"/>
        <dbReference type="ChEBI" id="CHEBI:88155"/>
    </reaction>
    <physiologicalReaction direction="left-to-right" evidence="3">
        <dbReference type="Rhea" id="RHEA:48025"/>
    </physiologicalReaction>
</comment>
<comment type="catalytic activity">
    <reaction evidence="3">
        <text>a butanoate ester + H2O = an aliphatic alcohol + butanoate + H(+)</text>
        <dbReference type="Rhea" id="RHEA:47348"/>
        <dbReference type="ChEBI" id="CHEBI:2571"/>
        <dbReference type="ChEBI" id="CHEBI:15377"/>
        <dbReference type="ChEBI" id="CHEBI:15378"/>
        <dbReference type="ChEBI" id="CHEBI:17968"/>
        <dbReference type="ChEBI" id="CHEBI:50477"/>
    </reaction>
    <physiologicalReaction direction="left-to-right" evidence="3">
        <dbReference type="Rhea" id="RHEA:47349"/>
    </physiologicalReaction>
</comment>
<comment type="catalytic activity">
    <reaction evidence="3">
        <text>an acetyl ester + H2O = an aliphatic alcohol + acetate + H(+)</text>
        <dbReference type="Rhea" id="RHEA:12957"/>
        <dbReference type="ChEBI" id="CHEBI:2571"/>
        <dbReference type="ChEBI" id="CHEBI:15377"/>
        <dbReference type="ChEBI" id="CHEBI:15378"/>
        <dbReference type="ChEBI" id="CHEBI:30089"/>
        <dbReference type="ChEBI" id="CHEBI:47622"/>
    </reaction>
    <physiologicalReaction direction="left-to-right" evidence="3">
        <dbReference type="Rhea" id="RHEA:12958"/>
    </physiologicalReaction>
</comment>
<comment type="catalytic activity">
    <reaction evidence="3">
        <text>1,2,3-tributanoylglycerol + H2O = dibutanoylglycerol + butanoate + H(+)</text>
        <dbReference type="Rhea" id="RHEA:40475"/>
        <dbReference type="ChEBI" id="CHEBI:15377"/>
        <dbReference type="ChEBI" id="CHEBI:15378"/>
        <dbReference type="ChEBI" id="CHEBI:17968"/>
        <dbReference type="ChEBI" id="CHEBI:35020"/>
        <dbReference type="ChEBI" id="CHEBI:76478"/>
    </reaction>
    <physiologicalReaction direction="left-to-right" evidence="3">
        <dbReference type="Rhea" id="RHEA:40476"/>
    </physiologicalReaction>
</comment>
<comment type="activity regulation">
    <text evidence="3">Strongly inhibited by diethyl paranitrophenyl phosphate, which is a specific inhibitor of serine hydrolases.</text>
</comment>
<comment type="biophysicochemical properties">
    <phDependence>
        <text evidence="3">Optimum pH is 7.0-8.0.</text>
    </phDependence>
    <temperatureDependence>
        <text evidence="3">Optimum temperature is 45 degrees Celsius.</text>
    </temperatureDependence>
</comment>
<comment type="subunit">
    <text evidence="7">Monomer.</text>
</comment>
<comment type="developmental stage">
    <text evidence="4">Remains active in dormant M.tuberculosis.</text>
</comment>
<comment type="similarity">
    <text evidence="6">Belongs to the 'GDXG' lipolytic enzyme family.</text>
</comment>
<keyword id="KW-0007">Acetylation</keyword>
<keyword id="KW-0378">Hydrolase</keyword>
<keyword id="KW-1185">Reference proteome</keyword>
<keyword id="KW-0719">Serine esterase</keyword>